<feature type="chain" id="PRO_0000131663" description="Small ribosomal subunit protein uS5">
    <location>
        <begin position="1"/>
        <end position="221"/>
    </location>
</feature>
<feature type="domain" description="S5 DRBM" evidence="1">
    <location>
        <begin position="46"/>
        <end position="109"/>
    </location>
</feature>
<sequence>MSEEWVPKTQLGKLVASGQIKTMGEALRSKLPLKEYEIVDYLLPNLKDEVIDIKRAQRMTDSGRRMTYSITVVVGNGDGYVGLGIGRSKEAAPAIRKALINAKLNIMEIRRGCGSWECGCGRAHTLPFLVQGKSGSVRITLKPAPRGVGLAVGDVARTILSIAGIEDAWGFAAGHTKTTVNYALAVYNALKETSKVRINPGIVLSTPIYSGSVVNVSGHKD</sequence>
<evidence type="ECO:0000255" key="1">
    <source>
        <dbReference type="HAMAP-Rule" id="MF_01307"/>
    </source>
</evidence>
<evidence type="ECO:0000305" key="2"/>
<accession>Q9HIS7</accession>
<protein>
    <recommendedName>
        <fullName evidence="1">Small ribosomal subunit protein uS5</fullName>
    </recommendedName>
    <alternativeName>
        <fullName evidence="2">30S ribosomal protein S5</fullName>
    </alternativeName>
</protein>
<gene>
    <name evidence="1" type="primary">rps5</name>
    <name type="ordered locus">Ta1251</name>
</gene>
<proteinExistence type="inferred from homology"/>
<organism>
    <name type="scientific">Thermoplasma acidophilum (strain ATCC 25905 / DSM 1728 / JCM 9062 / NBRC 15155 / AMRC-C165)</name>
    <dbReference type="NCBI Taxonomy" id="273075"/>
    <lineage>
        <taxon>Archaea</taxon>
        <taxon>Methanobacteriati</taxon>
        <taxon>Thermoplasmatota</taxon>
        <taxon>Thermoplasmata</taxon>
        <taxon>Thermoplasmatales</taxon>
        <taxon>Thermoplasmataceae</taxon>
        <taxon>Thermoplasma</taxon>
    </lineage>
</organism>
<comment type="function">
    <text evidence="1">With S4 and S12 plays an important role in translational accuracy.</text>
</comment>
<comment type="subunit">
    <text evidence="1">Part of the 30S ribosomal subunit. Contacts protein S4.</text>
</comment>
<comment type="domain">
    <text>The N-terminal domain interacts with the head of the 30S subunit; the C-terminal domain interacts with the body and contacts protein S4. The interaction surface between S4 and S5 is involved in control of translational fidelity.</text>
</comment>
<comment type="similarity">
    <text evidence="1">Belongs to the universal ribosomal protein uS5 family.</text>
</comment>
<dbReference type="EMBL" id="AL445067">
    <property type="protein sequence ID" value="CAC12375.1"/>
    <property type="molecule type" value="Genomic_DNA"/>
</dbReference>
<dbReference type="RefSeq" id="WP_010901658.1">
    <property type="nucleotide sequence ID" value="NC_002578.1"/>
</dbReference>
<dbReference type="SMR" id="Q9HIS7"/>
<dbReference type="FunCoup" id="Q9HIS7">
    <property type="interactions" value="202"/>
</dbReference>
<dbReference type="STRING" id="273075.gene:9572474"/>
<dbReference type="PaxDb" id="273075-Ta1251"/>
<dbReference type="EnsemblBacteria" id="CAC12375">
    <property type="protein sequence ID" value="CAC12375"/>
    <property type="gene ID" value="CAC12375"/>
</dbReference>
<dbReference type="KEGG" id="tac:Ta1251"/>
<dbReference type="eggNOG" id="arCOG04087">
    <property type="taxonomic scope" value="Archaea"/>
</dbReference>
<dbReference type="HOGENOM" id="CLU_065898_0_1_2"/>
<dbReference type="InParanoid" id="Q9HIS7"/>
<dbReference type="OrthoDB" id="38155at2157"/>
<dbReference type="Proteomes" id="UP000001024">
    <property type="component" value="Chromosome"/>
</dbReference>
<dbReference type="GO" id="GO:0022627">
    <property type="term" value="C:cytosolic small ribosomal subunit"/>
    <property type="evidence" value="ECO:0007669"/>
    <property type="project" value="TreeGrafter"/>
</dbReference>
<dbReference type="GO" id="GO:0019843">
    <property type="term" value="F:rRNA binding"/>
    <property type="evidence" value="ECO:0007669"/>
    <property type="project" value="UniProtKB-UniRule"/>
</dbReference>
<dbReference type="GO" id="GO:0003735">
    <property type="term" value="F:structural constituent of ribosome"/>
    <property type="evidence" value="ECO:0007669"/>
    <property type="project" value="InterPro"/>
</dbReference>
<dbReference type="GO" id="GO:0006412">
    <property type="term" value="P:translation"/>
    <property type="evidence" value="ECO:0007669"/>
    <property type="project" value="UniProtKB-UniRule"/>
</dbReference>
<dbReference type="FunFam" id="3.30.160.20:FF:000002">
    <property type="entry name" value="40S ribosomal protein S2"/>
    <property type="match status" value="1"/>
</dbReference>
<dbReference type="FunFam" id="3.30.230.10:FF:000004">
    <property type="entry name" value="40S ribosomal protein S2"/>
    <property type="match status" value="1"/>
</dbReference>
<dbReference type="Gene3D" id="3.30.160.20">
    <property type="match status" value="1"/>
</dbReference>
<dbReference type="Gene3D" id="3.30.230.10">
    <property type="match status" value="1"/>
</dbReference>
<dbReference type="HAMAP" id="MF_01307_A">
    <property type="entry name" value="Ribosomal_uS5_A"/>
    <property type="match status" value="1"/>
</dbReference>
<dbReference type="InterPro" id="IPR020568">
    <property type="entry name" value="Ribosomal_Su5_D2-typ_SF"/>
</dbReference>
<dbReference type="InterPro" id="IPR000851">
    <property type="entry name" value="Ribosomal_uS5"/>
</dbReference>
<dbReference type="InterPro" id="IPR047866">
    <property type="entry name" value="Ribosomal_uS5_arc"/>
</dbReference>
<dbReference type="InterPro" id="IPR005324">
    <property type="entry name" value="Ribosomal_uS5_C"/>
</dbReference>
<dbReference type="InterPro" id="IPR005711">
    <property type="entry name" value="Ribosomal_uS5_euk/arc"/>
</dbReference>
<dbReference type="InterPro" id="IPR013810">
    <property type="entry name" value="Ribosomal_uS5_N"/>
</dbReference>
<dbReference type="InterPro" id="IPR018192">
    <property type="entry name" value="Ribosomal_uS5_N_CS"/>
</dbReference>
<dbReference type="InterPro" id="IPR014721">
    <property type="entry name" value="Ribsml_uS5_D2-typ_fold_subgr"/>
</dbReference>
<dbReference type="NCBIfam" id="NF003125">
    <property type="entry name" value="PRK04044.1"/>
    <property type="match status" value="1"/>
</dbReference>
<dbReference type="NCBIfam" id="TIGR01020">
    <property type="entry name" value="uS5_euk_arch"/>
    <property type="match status" value="1"/>
</dbReference>
<dbReference type="PANTHER" id="PTHR13718:SF4">
    <property type="entry name" value="40S RIBOSOMAL PROTEIN S2"/>
    <property type="match status" value="1"/>
</dbReference>
<dbReference type="PANTHER" id="PTHR13718">
    <property type="entry name" value="RIBOSOMAL S SUBUNIT"/>
    <property type="match status" value="1"/>
</dbReference>
<dbReference type="Pfam" id="PF00333">
    <property type="entry name" value="Ribosomal_S5"/>
    <property type="match status" value="1"/>
</dbReference>
<dbReference type="Pfam" id="PF03719">
    <property type="entry name" value="Ribosomal_S5_C"/>
    <property type="match status" value="1"/>
</dbReference>
<dbReference type="SUPFAM" id="SSF54768">
    <property type="entry name" value="dsRNA-binding domain-like"/>
    <property type="match status" value="1"/>
</dbReference>
<dbReference type="SUPFAM" id="SSF54211">
    <property type="entry name" value="Ribosomal protein S5 domain 2-like"/>
    <property type="match status" value="1"/>
</dbReference>
<dbReference type="PROSITE" id="PS00585">
    <property type="entry name" value="RIBOSOMAL_S5"/>
    <property type="match status" value="1"/>
</dbReference>
<dbReference type="PROSITE" id="PS50881">
    <property type="entry name" value="S5_DSRBD"/>
    <property type="match status" value="1"/>
</dbReference>
<keyword id="KW-1185">Reference proteome</keyword>
<keyword id="KW-0687">Ribonucleoprotein</keyword>
<keyword id="KW-0689">Ribosomal protein</keyword>
<keyword id="KW-0694">RNA-binding</keyword>
<keyword id="KW-0699">rRNA-binding</keyword>
<reference key="1">
    <citation type="journal article" date="2000" name="Nature">
        <title>The genome sequence of the thermoacidophilic scavenger Thermoplasma acidophilum.</title>
        <authorList>
            <person name="Ruepp A."/>
            <person name="Graml W."/>
            <person name="Santos-Martinez M.-L."/>
            <person name="Koretke K.K."/>
            <person name="Volker C."/>
            <person name="Mewes H.-W."/>
            <person name="Frishman D."/>
            <person name="Stocker S."/>
            <person name="Lupas A.N."/>
            <person name="Baumeister W."/>
        </authorList>
    </citation>
    <scope>NUCLEOTIDE SEQUENCE [LARGE SCALE GENOMIC DNA]</scope>
    <source>
        <strain>ATCC 25905 / DSM 1728 / JCM 9062 / NBRC 15155 / AMRC-C165</strain>
    </source>
</reference>
<name>RS5_THEAC</name>